<protein>
    <recommendedName>
        <fullName evidence="1">Small ribosomal subunit protein uS19</fullName>
    </recommendedName>
    <alternativeName>
        <fullName evidence="2">30S ribosomal protein S19</fullName>
    </alternativeName>
</protein>
<dbReference type="EMBL" id="CP000926">
    <property type="protein sequence ID" value="ABY96399.1"/>
    <property type="molecule type" value="Genomic_DNA"/>
</dbReference>
<dbReference type="RefSeq" id="WP_003255482.1">
    <property type="nucleotide sequence ID" value="NC_010322.1"/>
</dbReference>
<dbReference type="SMR" id="B0KK71"/>
<dbReference type="GeneID" id="97165983"/>
<dbReference type="KEGG" id="ppg:PputGB1_0488"/>
<dbReference type="eggNOG" id="COG0185">
    <property type="taxonomic scope" value="Bacteria"/>
</dbReference>
<dbReference type="HOGENOM" id="CLU_144911_0_1_6"/>
<dbReference type="Proteomes" id="UP000002157">
    <property type="component" value="Chromosome"/>
</dbReference>
<dbReference type="GO" id="GO:0005737">
    <property type="term" value="C:cytoplasm"/>
    <property type="evidence" value="ECO:0007669"/>
    <property type="project" value="UniProtKB-ARBA"/>
</dbReference>
<dbReference type="GO" id="GO:0015935">
    <property type="term" value="C:small ribosomal subunit"/>
    <property type="evidence" value="ECO:0007669"/>
    <property type="project" value="InterPro"/>
</dbReference>
<dbReference type="GO" id="GO:0019843">
    <property type="term" value="F:rRNA binding"/>
    <property type="evidence" value="ECO:0007669"/>
    <property type="project" value="UniProtKB-UniRule"/>
</dbReference>
<dbReference type="GO" id="GO:0003735">
    <property type="term" value="F:structural constituent of ribosome"/>
    <property type="evidence" value="ECO:0007669"/>
    <property type="project" value="InterPro"/>
</dbReference>
<dbReference type="GO" id="GO:0000028">
    <property type="term" value="P:ribosomal small subunit assembly"/>
    <property type="evidence" value="ECO:0007669"/>
    <property type="project" value="TreeGrafter"/>
</dbReference>
<dbReference type="GO" id="GO:0006412">
    <property type="term" value="P:translation"/>
    <property type="evidence" value="ECO:0007669"/>
    <property type="project" value="UniProtKB-UniRule"/>
</dbReference>
<dbReference type="FunFam" id="3.30.860.10:FF:000001">
    <property type="entry name" value="30S ribosomal protein S19"/>
    <property type="match status" value="1"/>
</dbReference>
<dbReference type="Gene3D" id="3.30.860.10">
    <property type="entry name" value="30s Ribosomal Protein S19, Chain A"/>
    <property type="match status" value="1"/>
</dbReference>
<dbReference type="HAMAP" id="MF_00531">
    <property type="entry name" value="Ribosomal_uS19"/>
    <property type="match status" value="1"/>
</dbReference>
<dbReference type="InterPro" id="IPR002222">
    <property type="entry name" value="Ribosomal_uS19"/>
</dbReference>
<dbReference type="InterPro" id="IPR005732">
    <property type="entry name" value="Ribosomal_uS19_bac-type"/>
</dbReference>
<dbReference type="InterPro" id="IPR020934">
    <property type="entry name" value="Ribosomal_uS19_CS"/>
</dbReference>
<dbReference type="InterPro" id="IPR023575">
    <property type="entry name" value="Ribosomal_uS19_SF"/>
</dbReference>
<dbReference type="NCBIfam" id="TIGR01050">
    <property type="entry name" value="rpsS_bact"/>
    <property type="match status" value="1"/>
</dbReference>
<dbReference type="PANTHER" id="PTHR11880">
    <property type="entry name" value="RIBOSOMAL PROTEIN S19P FAMILY MEMBER"/>
    <property type="match status" value="1"/>
</dbReference>
<dbReference type="PANTHER" id="PTHR11880:SF8">
    <property type="entry name" value="SMALL RIBOSOMAL SUBUNIT PROTEIN US19M"/>
    <property type="match status" value="1"/>
</dbReference>
<dbReference type="Pfam" id="PF00203">
    <property type="entry name" value="Ribosomal_S19"/>
    <property type="match status" value="1"/>
</dbReference>
<dbReference type="PIRSF" id="PIRSF002144">
    <property type="entry name" value="Ribosomal_S19"/>
    <property type="match status" value="1"/>
</dbReference>
<dbReference type="PRINTS" id="PR00975">
    <property type="entry name" value="RIBOSOMALS19"/>
</dbReference>
<dbReference type="SUPFAM" id="SSF54570">
    <property type="entry name" value="Ribosomal protein S19"/>
    <property type="match status" value="1"/>
</dbReference>
<dbReference type="PROSITE" id="PS00323">
    <property type="entry name" value="RIBOSOMAL_S19"/>
    <property type="match status" value="1"/>
</dbReference>
<gene>
    <name evidence="1" type="primary">rpsS</name>
    <name type="ordered locus">PputGB1_0488</name>
</gene>
<sequence length="91" mass="10348">MPRSLKKGPFIDLHLLKKVEVAVEKNDRKPVKTWSRRSMILPQMVGLTIAVHNGRQHVPVLVNEDMVGHKLGEFAGTRTYRGHVADKKAKR</sequence>
<comment type="function">
    <text evidence="1">Protein S19 forms a complex with S13 that binds strongly to the 16S ribosomal RNA.</text>
</comment>
<comment type="similarity">
    <text evidence="1">Belongs to the universal ribosomal protein uS19 family.</text>
</comment>
<evidence type="ECO:0000255" key="1">
    <source>
        <dbReference type="HAMAP-Rule" id="MF_00531"/>
    </source>
</evidence>
<evidence type="ECO:0000305" key="2"/>
<feature type="chain" id="PRO_1000081785" description="Small ribosomal subunit protein uS19">
    <location>
        <begin position="1"/>
        <end position="91"/>
    </location>
</feature>
<accession>B0KK71</accession>
<organism>
    <name type="scientific">Pseudomonas putida (strain GB-1)</name>
    <dbReference type="NCBI Taxonomy" id="76869"/>
    <lineage>
        <taxon>Bacteria</taxon>
        <taxon>Pseudomonadati</taxon>
        <taxon>Pseudomonadota</taxon>
        <taxon>Gammaproteobacteria</taxon>
        <taxon>Pseudomonadales</taxon>
        <taxon>Pseudomonadaceae</taxon>
        <taxon>Pseudomonas</taxon>
    </lineage>
</organism>
<proteinExistence type="inferred from homology"/>
<keyword id="KW-0687">Ribonucleoprotein</keyword>
<keyword id="KW-0689">Ribosomal protein</keyword>
<keyword id="KW-0694">RNA-binding</keyword>
<keyword id="KW-0699">rRNA-binding</keyword>
<reference key="1">
    <citation type="submission" date="2008-01" db="EMBL/GenBank/DDBJ databases">
        <title>Complete sequence of Pseudomonas putida GB-1.</title>
        <authorList>
            <consortium name="US DOE Joint Genome Institute"/>
            <person name="Copeland A."/>
            <person name="Lucas S."/>
            <person name="Lapidus A."/>
            <person name="Barry K."/>
            <person name="Glavina del Rio T."/>
            <person name="Dalin E."/>
            <person name="Tice H."/>
            <person name="Pitluck S."/>
            <person name="Bruce D."/>
            <person name="Goodwin L."/>
            <person name="Chertkov O."/>
            <person name="Brettin T."/>
            <person name="Detter J.C."/>
            <person name="Han C."/>
            <person name="Kuske C.R."/>
            <person name="Schmutz J."/>
            <person name="Larimer F."/>
            <person name="Land M."/>
            <person name="Hauser L."/>
            <person name="Kyrpides N."/>
            <person name="Kim E."/>
            <person name="McCarthy J.K."/>
            <person name="Richardson P."/>
        </authorList>
    </citation>
    <scope>NUCLEOTIDE SEQUENCE [LARGE SCALE GENOMIC DNA]</scope>
    <source>
        <strain>GB-1</strain>
    </source>
</reference>
<name>RS19_PSEPG</name>